<organism>
    <name type="scientific">Mycolicibacterium paratuberculosis (strain ATCC BAA-968 / K-10)</name>
    <name type="common">Mycobacterium paratuberculosis</name>
    <dbReference type="NCBI Taxonomy" id="262316"/>
    <lineage>
        <taxon>Bacteria</taxon>
        <taxon>Bacillati</taxon>
        <taxon>Actinomycetota</taxon>
        <taxon>Actinomycetes</taxon>
        <taxon>Mycobacteriales</taxon>
        <taxon>Mycobacteriaceae</taxon>
        <taxon>Mycobacterium</taxon>
        <taxon>Mycobacterium avium complex (MAC)</taxon>
    </lineage>
</organism>
<reference key="1">
    <citation type="journal article" date="2001" name="J. Med. Microbiol.">
        <title>Identification of two Mycobacterium avium subspecies paratuberculosis gene products differentially recognised by sera from rabbits immunised with live mycobacteria but not heat-killed mycobacteria.</title>
        <authorList>
            <person name="Bannantine J.P."/>
            <person name="Stabel J.R."/>
        </authorList>
    </citation>
    <scope>NUCLEOTIDE SEQUENCE [GENOMIC DNA]</scope>
    <source>
        <strain>ATCC 19698 / CIP 103963 / DSM 44133 / TMC 807</strain>
    </source>
</reference>
<reference key="2">
    <citation type="journal article" date="2005" name="Proc. Natl. Acad. Sci. U.S.A.">
        <title>The complete genome sequence of Mycobacterium avium subspecies paratuberculosis.</title>
        <authorList>
            <person name="Li L."/>
            <person name="Bannantine J.P."/>
            <person name="Zhang Q."/>
            <person name="Amonsin A."/>
            <person name="May B.J."/>
            <person name="Alt D."/>
            <person name="Banerji N."/>
            <person name="Kanjilal S."/>
            <person name="Kapur V."/>
        </authorList>
    </citation>
    <scope>NUCLEOTIDE SEQUENCE [LARGE SCALE GENOMIC DNA]</scope>
    <source>
        <strain>ATCC BAA-968 / K-10</strain>
    </source>
</reference>
<reference key="3">
    <citation type="journal article" date="2015" name="Vet. Microbiol.">
        <title>Envelope protein complexes of Mycobacterium avium subsp. paratuberculosis and their antigenicity.</title>
        <authorList>
            <person name="Leite F.L."/>
            <person name="Reinhardt T.A."/>
            <person name="Bannantine J.P."/>
            <person name="Stabel J.R."/>
        </authorList>
    </citation>
    <scope>IDENTIFICATION BY MASS SPECTROMETRY</scope>
    <scope>INTERACTION WITH TYPE 2A ENCAPSULIN</scope>
    <scope>SUBUNIT</scope>
    <scope>SUBCELLULAR LOCATION</scope>
    <scope>ANTIGENICITY</scope>
    <source>
        <strain>509</strain>
    </source>
</reference>
<comment type="function">
    <text evidence="2">Cargo protein of a type 2A encapsulin nanocompartment involved in sulfur metabolism. Cysteine desulfurases mobilize the sulfur from L-cysteine to yield L-alanine, an essential step in sulfur metabolism for biosynthesis of a variety of sulfur-containing biomolecules.</text>
</comment>
<comment type="catalytic activity">
    <reaction evidence="2">
        <text>(sulfur carrier)-H + L-cysteine = (sulfur carrier)-SH + L-alanine</text>
        <dbReference type="Rhea" id="RHEA:43892"/>
        <dbReference type="Rhea" id="RHEA-COMP:14737"/>
        <dbReference type="Rhea" id="RHEA-COMP:14739"/>
        <dbReference type="ChEBI" id="CHEBI:29917"/>
        <dbReference type="ChEBI" id="CHEBI:35235"/>
        <dbReference type="ChEBI" id="CHEBI:57972"/>
        <dbReference type="ChEBI" id="CHEBI:64428"/>
        <dbReference type="EC" id="2.8.1.7"/>
    </reaction>
</comment>
<comment type="cofactor">
    <cofactor evidence="1">
        <name>pyridoxal 5'-phosphate</name>
        <dbReference type="ChEBI" id="CHEBI:597326"/>
    </cofactor>
</comment>
<comment type="subunit">
    <text evidence="2 4">Isolated from bacteria in a complex with encapsulin 2A (AC I3NID5), strongly suggesting it is found in a type 2A encapsulin nanocompartment (PubMed:25500374). There are 1-2 copies of this protein in each encapsulin shell (By similarity).</text>
</comment>
<comment type="subcellular location">
    <subcellularLocation>
        <location evidence="2 5">Encapsulin nanocompartment</location>
    </subcellularLocation>
    <subcellularLocation>
        <location evidence="6">Cell membrane</location>
    </subcellularLocation>
</comment>
<comment type="miscellaneous">
    <text evidence="4">Cattle naturally infected with M.paratuberculosis have antisera that recognize this protein.</text>
</comment>
<comment type="similarity">
    <text evidence="5">Belongs to the class-V pyridoxal-phosphate-dependent aminotransferase family. Csd subfamily.</text>
</comment>
<comment type="sequence caution" evidence="5">
    <conflict type="erroneous initiation">
        <sequence resource="EMBL-CDS" id="AAS04437"/>
    </conflict>
    <text>Truncated N-terminus.</text>
</comment>
<protein>
    <recommendedName>
        <fullName>Probable cysteine desulfurase</fullName>
        <ecNumber>2.8.1.7</ecNumber>
    </recommendedName>
</protein>
<sequence length="685" mass="71595">MTRSPCSTTSRWISSMSTSEYRAVDAESDLPISAAELAALASQLYAASIRPGPDSPPQQAPVAPRGSVPDATAATSAGRTAAGTADVYPGPVPQVGGRDVYLPPPASPAPEAPPQAAPPAPRGSAPDATAATSAGRAAAGTSDVYSSWVPQLGVADIYLGAPTPAGPEAPPQSAPPAPRGQVPDTTAAATAYGADLSAFAVPTGIVSTAPGVQAGTAPPVPVVPRAATAPSWLPEAPSVADLGWSDAPAPDAPAGDEHDYHFLTKTDPVPQFRDEHEVFDVAAIRSDFPILKETVNGKPLIWFDNAATTQKPQVVIDRLSHFYAHENSNIHRAAHELAARATDAYEEARDTVAEFIGAPSSDNIVFVRGTTEAINLVAHAWGAKHLQPGDEIVITHLEHHANIVPWQLISQKTGAILKVAPIDDAGNLLLSEFEGLLGPRTKLVAASHVSNALGTVMPVDKIVELGHRYGARVLIDGAQSIQHIPIDVAELGADFFVFSGHKIYGPTGIGALYGTEEALTETPPWQGGGHMIADVTLERSLYQGPPTKFEAGTGNIADAVGLTEALRYVQRLGVERIAAYEHALLEYATPRLADIPGVRLIGTAQEKASVLSFVLAGHEPLEVGKALNAEGIAVRAGHHCAQPALRRLGLEATVRPSFAFYNTFEEIDVFLRAVRRIAEGGANVG</sequence>
<name>CYD_MYCPA</name>
<feature type="chain" id="PRO_0000150303" description="Probable cysteine desulfurase">
    <location>
        <begin position="1"/>
        <end position="685"/>
    </location>
</feature>
<feature type="region of interest" description="Cargo-loading domain" evidence="2">
    <location>
        <begin position="1"/>
        <end position="282"/>
    </location>
</feature>
<feature type="region of interest" description="Disordered" evidence="3">
    <location>
        <begin position="48"/>
        <end position="135"/>
    </location>
</feature>
<feature type="region of interest" description="Disordered" evidence="3">
    <location>
        <begin position="162"/>
        <end position="185"/>
    </location>
</feature>
<feature type="compositionally biased region" description="Low complexity" evidence="3">
    <location>
        <begin position="71"/>
        <end position="85"/>
    </location>
</feature>
<feature type="compositionally biased region" description="Pro residues" evidence="3">
    <location>
        <begin position="102"/>
        <end position="121"/>
    </location>
</feature>
<feature type="compositionally biased region" description="Low complexity" evidence="3">
    <location>
        <begin position="122"/>
        <end position="135"/>
    </location>
</feature>
<feature type="compositionally biased region" description="Pro residues" evidence="3">
    <location>
        <begin position="164"/>
        <end position="178"/>
    </location>
</feature>
<feature type="active site" description="Cysteine persulfide intermediate" evidence="1">
    <location>
        <position position="640"/>
    </location>
</feature>
<feature type="modified residue" description="N6-(pyridoxal phosphate)lysine" evidence="1">
    <location>
        <position position="502"/>
    </location>
</feature>
<gene>
    <name evidence="2" type="primary">cyd</name>
    <name type="ordered locus">MAP_2120c</name>
</gene>
<evidence type="ECO:0000250" key="1">
    <source>
        <dbReference type="UniProtKB" id="P77444"/>
    </source>
</evidence>
<evidence type="ECO:0000250" key="2">
    <source>
        <dbReference type="UniProtKB" id="Q8KUU5"/>
    </source>
</evidence>
<evidence type="ECO:0000256" key="3">
    <source>
        <dbReference type="SAM" id="MobiDB-lite"/>
    </source>
</evidence>
<evidence type="ECO:0000269" key="4">
    <source>
    </source>
</evidence>
<evidence type="ECO:0000305" key="5"/>
<evidence type="ECO:0000305" key="6">
    <source>
    </source>
</evidence>
<dbReference type="EC" id="2.8.1.7"/>
<dbReference type="EMBL" id="AF232751">
    <property type="protein sequence ID" value="AAF82074.1"/>
    <property type="molecule type" value="Genomic_DNA"/>
</dbReference>
<dbReference type="EMBL" id="AE016958">
    <property type="protein sequence ID" value="AAS04437.1"/>
    <property type="status" value="ALT_INIT"/>
    <property type="molecule type" value="Genomic_DNA"/>
</dbReference>
<dbReference type="RefSeq" id="WP_010949486.1">
    <property type="nucleotide sequence ID" value="NZ_CP106873.1"/>
</dbReference>
<dbReference type="SMR" id="Q9KII6"/>
<dbReference type="STRING" id="262316.MAP_2120c"/>
<dbReference type="KEGG" id="mpa:MAP_2120c"/>
<dbReference type="eggNOG" id="COG0520">
    <property type="taxonomic scope" value="Bacteria"/>
</dbReference>
<dbReference type="HOGENOM" id="CLU_003433_7_0_11"/>
<dbReference type="Proteomes" id="UP000000580">
    <property type="component" value="Chromosome"/>
</dbReference>
<dbReference type="GO" id="GO:0140737">
    <property type="term" value="C:encapsulin nanocompartment"/>
    <property type="evidence" value="ECO:0007669"/>
    <property type="project" value="UniProtKB-SubCell"/>
</dbReference>
<dbReference type="GO" id="GO:0005886">
    <property type="term" value="C:plasma membrane"/>
    <property type="evidence" value="ECO:0007669"/>
    <property type="project" value="UniProtKB-SubCell"/>
</dbReference>
<dbReference type="GO" id="GO:0031071">
    <property type="term" value="F:cysteine desulfurase activity"/>
    <property type="evidence" value="ECO:0007669"/>
    <property type="project" value="UniProtKB-EC"/>
</dbReference>
<dbReference type="GO" id="GO:0030170">
    <property type="term" value="F:pyridoxal phosphate binding"/>
    <property type="evidence" value="ECO:0007669"/>
    <property type="project" value="InterPro"/>
</dbReference>
<dbReference type="GO" id="GO:0006534">
    <property type="term" value="P:cysteine metabolic process"/>
    <property type="evidence" value="ECO:0007669"/>
    <property type="project" value="InterPro"/>
</dbReference>
<dbReference type="CDD" id="cd06453">
    <property type="entry name" value="SufS_like"/>
    <property type="match status" value="1"/>
</dbReference>
<dbReference type="Gene3D" id="3.90.1150.10">
    <property type="entry name" value="Aspartate Aminotransferase, domain 1"/>
    <property type="match status" value="1"/>
</dbReference>
<dbReference type="Gene3D" id="3.40.640.10">
    <property type="entry name" value="Type I PLP-dependent aspartate aminotransferase-like (Major domain)"/>
    <property type="match status" value="1"/>
</dbReference>
<dbReference type="InterPro" id="IPR000192">
    <property type="entry name" value="Aminotrans_V_dom"/>
</dbReference>
<dbReference type="InterPro" id="IPR010970">
    <property type="entry name" value="Cys_dSase_SufS"/>
</dbReference>
<dbReference type="InterPro" id="IPR015424">
    <property type="entry name" value="PyrdxlP-dep_Trfase"/>
</dbReference>
<dbReference type="InterPro" id="IPR015421">
    <property type="entry name" value="PyrdxlP-dep_Trfase_major"/>
</dbReference>
<dbReference type="InterPro" id="IPR015422">
    <property type="entry name" value="PyrdxlP-dep_Trfase_small"/>
</dbReference>
<dbReference type="NCBIfam" id="NF041166">
    <property type="entry name" value="f2_encap_cargo1"/>
    <property type="match status" value="1"/>
</dbReference>
<dbReference type="NCBIfam" id="TIGR01979">
    <property type="entry name" value="sufS"/>
    <property type="match status" value="1"/>
</dbReference>
<dbReference type="PANTHER" id="PTHR43586">
    <property type="entry name" value="CYSTEINE DESULFURASE"/>
    <property type="match status" value="1"/>
</dbReference>
<dbReference type="PANTHER" id="PTHR43586:SF8">
    <property type="entry name" value="CYSTEINE DESULFURASE 1, CHLOROPLASTIC"/>
    <property type="match status" value="1"/>
</dbReference>
<dbReference type="Pfam" id="PF00266">
    <property type="entry name" value="Aminotran_5"/>
    <property type="match status" value="1"/>
</dbReference>
<dbReference type="SUPFAM" id="SSF53383">
    <property type="entry name" value="PLP-dependent transferases"/>
    <property type="match status" value="1"/>
</dbReference>
<keyword id="KW-1003">Cell membrane</keyword>
<keyword id="KW-1284">Encapsulin nanocompartment</keyword>
<keyword id="KW-0472">Membrane</keyword>
<keyword id="KW-0663">Pyridoxal phosphate</keyword>
<keyword id="KW-1185">Reference proteome</keyword>
<keyword id="KW-0808">Transferase</keyword>
<accession>Q9KII6</accession>
<proteinExistence type="evidence at protein level"/>